<organism>
    <name type="scientific">Bos taurus</name>
    <name type="common">Bovine</name>
    <dbReference type="NCBI Taxonomy" id="9913"/>
    <lineage>
        <taxon>Eukaryota</taxon>
        <taxon>Metazoa</taxon>
        <taxon>Chordata</taxon>
        <taxon>Craniata</taxon>
        <taxon>Vertebrata</taxon>
        <taxon>Euteleostomi</taxon>
        <taxon>Mammalia</taxon>
        <taxon>Eutheria</taxon>
        <taxon>Laurasiatheria</taxon>
        <taxon>Artiodactyla</taxon>
        <taxon>Ruminantia</taxon>
        <taxon>Pecora</taxon>
        <taxon>Bovidae</taxon>
        <taxon>Bovinae</taxon>
        <taxon>Bos</taxon>
    </lineage>
</organism>
<comment type="function">
    <text>Calcium/phospholipid-binding protein which promotes membrane fusion and is involved in exocytosis.</text>
</comment>
<comment type="subunit">
    <text evidence="1">Interacts with PDCD6.</text>
</comment>
<comment type="domain">
    <text>A pair of annexin repeats may form one binding site for calcium and phospholipid.</text>
</comment>
<comment type="similarity">
    <text evidence="3 5">Belongs to the annexin family.</text>
</comment>
<evidence type="ECO:0000250" key="1"/>
<evidence type="ECO:0000250" key="2">
    <source>
        <dbReference type="UniProtKB" id="P20073"/>
    </source>
</evidence>
<evidence type="ECO:0000255" key="3">
    <source>
        <dbReference type="PROSITE-ProRule" id="PRU01245"/>
    </source>
</evidence>
<evidence type="ECO:0000256" key="4">
    <source>
        <dbReference type="SAM" id="MobiDB-lite"/>
    </source>
</evidence>
<evidence type="ECO:0000305" key="5"/>
<gene>
    <name type="primary">ANXA7</name>
    <name type="synonym">ANX7</name>
</gene>
<sequence length="463" mass="49940">MSYPGYPPTGYPPFPGYPPTGQESSFPPPGQYPYPSGFPPMGGGAYPPAPSSGYPGAGGYPAPGGYPAPGGYPGAPQPGGAPSYPGGQGFGAPPGGAGFPGYPQPPTQSYGGGPAQVPLPGGFPGGAMPSQYPGGQSPYPSQPAPMTQGTHGTIRPAANFDAMRDAEVLRKAMKGFGTDEQAIIDVVANRSNDQRQKIKAAFKTMYGKDLIKDLKSELSGNMEELILALFMPSTYYDAWSLRNAMKGAGTQERVLIEILCTRTNQEIREIVRCYQSEFGRDLEKDIRSDTSGHFERLLVSMCQGNRDENQNVNHQLAQEDAQRLYQAGEGRLGTDESCFNMILATRSFPQLKATMEAYSRMANRDLLNSVSREFSGNVESGLKTILQCALNRPAFFAERLYYSMKGAGTDDSTLVRIVVTRSEIDLVQIKQMFSQMYQKTLGTMIASDTSGDYRKLLLAIVGQ</sequence>
<proteinExistence type="evidence at protein level"/>
<protein>
    <recommendedName>
        <fullName>Annexin A7</fullName>
    </recommendedName>
    <alternativeName>
        <fullName>Annexin VII</fullName>
    </alternativeName>
    <alternativeName>
        <fullName>Annexin-7</fullName>
    </alternativeName>
    <alternativeName>
        <fullName>Synexin</fullName>
    </alternativeName>
</protein>
<accession>P20072</accession>
<accession>Q1LZ88</accession>
<reference key="1">
    <citation type="submission" date="2006-05" db="EMBL/GenBank/DDBJ databases">
        <authorList>
            <consortium name="NIH - Mammalian Gene Collection (MGC) project"/>
        </authorList>
    </citation>
    <scope>NUCLEOTIDE SEQUENCE [LARGE SCALE MRNA]</scope>
    <source>
        <strain>Hereford</strain>
        <tissue>Hippocampus</tissue>
    </source>
</reference>
<reference key="2">
    <citation type="journal article" date="1988" name="Biochem. Biophys. Res. Commun.">
        <title>Pattern of repeating aromatic residues in synexin. Similarity to the cytoplasmic domain of synaptophysin.</title>
        <authorList>
            <person name="Creutz C.E."/>
            <person name="Snyder S.L."/>
            <person name="Husted L.D."/>
            <person name="Beggerly L.K."/>
            <person name="Fox J.W."/>
        </authorList>
    </citation>
    <scope>PROTEIN SEQUENCE OF 25-85</scope>
</reference>
<feature type="chain" id="PRO_0000067498" description="Annexin A7">
    <location>
        <begin position="1"/>
        <end position="463"/>
    </location>
</feature>
<feature type="repeat" description="Annexin 1" evidence="3">
    <location>
        <begin position="160"/>
        <end position="231"/>
    </location>
</feature>
<feature type="repeat" description="Annexin 2" evidence="3">
    <location>
        <begin position="232"/>
        <end position="303"/>
    </location>
</feature>
<feature type="repeat" description="Annexin 3" evidence="3">
    <location>
        <begin position="315"/>
        <end position="387"/>
    </location>
</feature>
<feature type="repeat" description="Annexin 4" evidence="3">
    <location>
        <begin position="391"/>
        <end position="462"/>
    </location>
</feature>
<feature type="region of interest" description="Repeat-rich region" evidence="1">
    <location>
        <begin position="1"/>
        <end position="140"/>
    </location>
</feature>
<feature type="region of interest" description="Disordered" evidence="4">
    <location>
        <begin position="1"/>
        <end position="54"/>
    </location>
</feature>
<feature type="region of interest" description="3 X 5 AA tandem repeats of G-Y-P-P-X">
    <location>
        <begin position="5"/>
        <end position="20"/>
    </location>
</feature>
<feature type="region of interest" description="Disordered" evidence="4">
    <location>
        <begin position="71"/>
        <end position="153"/>
    </location>
</feature>
<feature type="compositionally biased region" description="Pro residues" evidence="4">
    <location>
        <begin position="1"/>
        <end position="18"/>
    </location>
</feature>
<feature type="compositionally biased region" description="Pro residues" evidence="4">
    <location>
        <begin position="26"/>
        <end position="38"/>
    </location>
</feature>
<feature type="compositionally biased region" description="Gly residues" evidence="4">
    <location>
        <begin position="86"/>
        <end position="99"/>
    </location>
</feature>
<feature type="modified residue" description="N6-acetyllysine" evidence="2">
    <location>
        <position position="208"/>
    </location>
</feature>
<keyword id="KW-0007">Acetylation</keyword>
<keyword id="KW-0041">Annexin</keyword>
<keyword id="KW-0106">Calcium</keyword>
<keyword id="KW-0111">Calcium/phospholipid-binding</keyword>
<keyword id="KW-0903">Direct protein sequencing</keyword>
<keyword id="KW-1185">Reference proteome</keyword>
<keyword id="KW-0677">Repeat</keyword>
<name>ANXA7_BOVIN</name>
<dbReference type="EMBL" id="BC116141">
    <property type="protein sequence ID" value="AAI16142.1"/>
    <property type="molecule type" value="mRNA"/>
</dbReference>
<dbReference type="PIR" id="A27695">
    <property type="entry name" value="A27695"/>
</dbReference>
<dbReference type="RefSeq" id="NP_001069459.1">
    <property type="nucleotide sequence ID" value="NM_001075991.1"/>
</dbReference>
<dbReference type="RefSeq" id="XP_005226474.2">
    <property type="nucleotide sequence ID" value="XM_005226417.5"/>
</dbReference>
<dbReference type="SMR" id="P20072"/>
<dbReference type="FunCoup" id="P20072">
    <property type="interactions" value="1970"/>
</dbReference>
<dbReference type="STRING" id="9913.ENSBTAP00000065090"/>
<dbReference type="PaxDb" id="9913-ENSBTAP00000046882"/>
<dbReference type="PeptideAtlas" id="P20072"/>
<dbReference type="GeneID" id="533360"/>
<dbReference type="KEGG" id="bta:533360"/>
<dbReference type="CTD" id="310"/>
<dbReference type="VEuPathDB" id="HostDB:ENSBTAG00000020218"/>
<dbReference type="eggNOG" id="KOG0819">
    <property type="taxonomic scope" value="Eukaryota"/>
</dbReference>
<dbReference type="HOGENOM" id="CLU_025300_6_1_1"/>
<dbReference type="InParanoid" id="P20072"/>
<dbReference type="OrthoDB" id="37886at2759"/>
<dbReference type="TreeFam" id="TF105452"/>
<dbReference type="Proteomes" id="UP000009136">
    <property type="component" value="Chromosome 28"/>
</dbReference>
<dbReference type="Bgee" id="ENSBTAG00000020218">
    <property type="expression patterns" value="Expressed in gluteal muscle and 109 other cell types or tissues"/>
</dbReference>
<dbReference type="GO" id="GO:0042584">
    <property type="term" value="C:chromaffin granule membrane"/>
    <property type="evidence" value="ECO:0000314"/>
    <property type="project" value="AgBase"/>
</dbReference>
<dbReference type="GO" id="GO:0005737">
    <property type="term" value="C:cytoplasm"/>
    <property type="evidence" value="ECO:0000318"/>
    <property type="project" value="GO_Central"/>
</dbReference>
<dbReference type="GO" id="GO:0005634">
    <property type="term" value="C:nucleus"/>
    <property type="evidence" value="ECO:0000318"/>
    <property type="project" value="GO_Central"/>
</dbReference>
<dbReference type="GO" id="GO:0005886">
    <property type="term" value="C:plasma membrane"/>
    <property type="evidence" value="ECO:0000318"/>
    <property type="project" value="GO_Central"/>
</dbReference>
<dbReference type="GO" id="GO:0012506">
    <property type="term" value="C:vesicle membrane"/>
    <property type="evidence" value="ECO:0000318"/>
    <property type="project" value="GO_Central"/>
</dbReference>
<dbReference type="GO" id="GO:0005509">
    <property type="term" value="F:calcium ion binding"/>
    <property type="evidence" value="ECO:0007669"/>
    <property type="project" value="InterPro"/>
</dbReference>
<dbReference type="GO" id="GO:0005544">
    <property type="term" value="F:calcium-dependent phospholipid binding"/>
    <property type="evidence" value="ECO:0000318"/>
    <property type="project" value="GO_Central"/>
</dbReference>
<dbReference type="GO" id="GO:0001786">
    <property type="term" value="F:phosphatidylserine binding"/>
    <property type="evidence" value="ECO:0000318"/>
    <property type="project" value="GO_Central"/>
</dbReference>
<dbReference type="FunFam" id="1.10.220.10:FF:000001">
    <property type="entry name" value="Annexin"/>
    <property type="match status" value="1"/>
</dbReference>
<dbReference type="FunFam" id="1.10.220.10:FF:000002">
    <property type="entry name" value="Annexin"/>
    <property type="match status" value="1"/>
</dbReference>
<dbReference type="FunFam" id="1.10.220.10:FF:000003">
    <property type="entry name" value="Annexin"/>
    <property type="match status" value="1"/>
</dbReference>
<dbReference type="FunFam" id="1.10.220.10:FF:000004">
    <property type="entry name" value="Annexin"/>
    <property type="match status" value="1"/>
</dbReference>
<dbReference type="Gene3D" id="1.10.220.10">
    <property type="entry name" value="Annexin"/>
    <property type="match status" value="4"/>
</dbReference>
<dbReference type="InterPro" id="IPR001464">
    <property type="entry name" value="Annexin"/>
</dbReference>
<dbReference type="InterPro" id="IPR018502">
    <property type="entry name" value="Annexin_repeat"/>
</dbReference>
<dbReference type="InterPro" id="IPR018252">
    <property type="entry name" value="Annexin_repeat_CS"/>
</dbReference>
<dbReference type="InterPro" id="IPR037104">
    <property type="entry name" value="Annexin_sf"/>
</dbReference>
<dbReference type="PANTHER" id="PTHR10502">
    <property type="entry name" value="ANNEXIN"/>
    <property type="match status" value="1"/>
</dbReference>
<dbReference type="PANTHER" id="PTHR10502:SF239">
    <property type="entry name" value="ANNEXIN A7"/>
    <property type="match status" value="1"/>
</dbReference>
<dbReference type="Pfam" id="PF00191">
    <property type="entry name" value="Annexin"/>
    <property type="match status" value="4"/>
</dbReference>
<dbReference type="PRINTS" id="PR00196">
    <property type="entry name" value="ANNEXIN"/>
</dbReference>
<dbReference type="PRINTS" id="PR01871">
    <property type="entry name" value="ANNEXINVII"/>
</dbReference>
<dbReference type="SMART" id="SM00335">
    <property type="entry name" value="ANX"/>
    <property type="match status" value="4"/>
</dbReference>
<dbReference type="SUPFAM" id="SSF47874">
    <property type="entry name" value="Annexin"/>
    <property type="match status" value="1"/>
</dbReference>
<dbReference type="PROSITE" id="PS00223">
    <property type="entry name" value="ANNEXIN_1"/>
    <property type="match status" value="4"/>
</dbReference>
<dbReference type="PROSITE" id="PS51897">
    <property type="entry name" value="ANNEXIN_2"/>
    <property type="match status" value="4"/>
</dbReference>